<gene>
    <name evidence="6" type="primary">brlA</name>
    <name type="ORF">An01g10540</name>
</gene>
<accession>A2QA83</accession>
<reference key="1">
    <citation type="journal article" date="2007" name="Nat. Biotechnol.">
        <title>Genome sequencing and analysis of the versatile cell factory Aspergillus niger CBS 513.88.</title>
        <authorList>
            <person name="Pel H.J."/>
            <person name="de Winde J.H."/>
            <person name="Archer D.B."/>
            <person name="Dyer P.S."/>
            <person name="Hofmann G."/>
            <person name="Schaap P.J."/>
            <person name="Turner G."/>
            <person name="de Vries R.P."/>
            <person name="Albang R."/>
            <person name="Albermann K."/>
            <person name="Andersen M.R."/>
            <person name="Bendtsen J.D."/>
            <person name="Benen J.A.E."/>
            <person name="van den Berg M."/>
            <person name="Breestraat S."/>
            <person name="Caddick M.X."/>
            <person name="Contreras R."/>
            <person name="Cornell M."/>
            <person name="Coutinho P.M."/>
            <person name="Danchin E.G.J."/>
            <person name="Debets A.J.M."/>
            <person name="Dekker P."/>
            <person name="van Dijck P.W.M."/>
            <person name="van Dijk A."/>
            <person name="Dijkhuizen L."/>
            <person name="Driessen A.J.M."/>
            <person name="d'Enfert C."/>
            <person name="Geysens S."/>
            <person name="Goosen C."/>
            <person name="Groot G.S.P."/>
            <person name="de Groot P.W.J."/>
            <person name="Guillemette T."/>
            <person name="Henrissat B."/>
            <person name="Herweijer M."/>
            <person name="van den Hombergh J.P.T.W."/>
            <person name="van den Hondel C.A.M.J.J."/>
            <person name="van der Heijden R.T.J.M."/>
            <person name="van der Kaaij R.M."/>
            <person name="Klis F.M."/>
            <person name="Kools H.J."/>
            <person name="Kubicek C.P."/>
            <person name="van Kuyk P.A."/>
            <person name="Lauber J."/>
            <person name="Lu X."/>
            <person name="van der Maarel M.J.E.C."/>
            <person name="Meulenberg R."/>
            <person name="Menke H."/>
            <person name="Mortimer M.A."/>
            <person name="Nielsen J."/>
            <person name="Oliver S.G."/>
            <person name="Olsthoorn M."/>
            <person name="Pal K."/>
            <person name="van Peij N.N.M.E."/>
            <person name="Ram A.F.J."/>
            <person name="Rinas U."/>
            <person name="Roubos J.A."/>
            <person name="Sagt C.M.J."/>
            <person name="Schmoll M."/>
            <person name="Sun J."/>
            <person name="Ussery D."/>
            <person name="Varga J."/>
            <person name="Vervecken W."/>
            <person name="van de Vondervoort P.J.J."/>
            <person name="Wedler H."/>
            <person name="Woesten H.A.B."/>
            <person name="Zeng A.-P."/>
            <person name="van Ooyen A.J.J."/>
            <person name="Visser J."/>
            <person name="Stam H."/>
        </authorList>
    </citation>
    <scope>NUCLEOTIDE SEQUENCE [LARGE SCALE GENOMIC DNA]</scope>
    <source>
        <strain>ATCC MYA-4892 / CBS 513.88 / FGSC A1513</strain>
    </source>
</reference>
<reference key="2">
    <citation type="journal article" date="2015" name="PLoS ONE">
        <title>Systems approaches to predict the functions of glycoside hydrolases during the life cycle of Aspergillus niger using developmental mutants delta-brlA and delta-flbA.</title>
        <authorList>
            <person name="van Munster J.M."/>
            <person name="Nitsche B.M."/>
            <person name="Akeroyd M."/>
            <person name="Dijkhuizen L."/>
            <person name="van der Maarel M.J."/>
            <person name="Ram A.F."/>
        </authorList>
    </citation>
    <scope>FUNCTION</scope>
    <scope>DISRUPTION PHENOTYPE</scope>
</reference>
<feature type="chain" id="PRO_0000435944" description="C2H2 type master regulator of conidiophore development brlA">
    <location>
        <begin position="1"/>
        <end position="425"/>
    </location>
</feature>
<feature type="zinc finger region" description="C2H2-type 1" evidence="3">
    <location>
        <begin position="321"/>
        <end position="345"/>
    </location>
</feature>
<feature type="zinc finger region" description="C2H2-type 2" evidence="3">
    <location>
        <begin position="351"/>
        <end position="376"/>
    </location>
</feature>
<feature type="region of interest" description="Disordered" evidence="4">
    <location>
        <begin position="28"/>
        <end position="72"/>
    </location>
</feature>
<feature type="region of interest" description="Disordered" evidence="4">
    <location>
        <begin position="232"/>
        <end position="257"/>
    </location>
</feature>
<feature type="region of interest" description="Disordered" evidence="4">
    <location>
        <begin position="281"/>
        <end position="301"/>
    </location>
</feature>
<feature type="region of interest" description="Disordered" evidence="4">
    <location>
        <begin position="365"/>
        <end position="425"/>
    </location>
</feature>
<feature type="compositionally biased region" description="Low complexity" evidence="4">
    <location>
        <begin position="30"/>
        <end position="44"/>
    </location>
</feature>
<feature type="compositionally biased region" description="Polar residues" evidence="4">
    <location>
        <begin position="232"/>
        <end position="256"/>
    </location>
</feature>
<feature type="compositionally biased region" description="Basic residues" evidence="4">
    <location>
        <begin position="285"/>
        <end position="294"/>
    </location>
</feature>
<feature type="compositionally biased region" description="Basic residues" evidence="4">
    <location>
        <begin position="365"/>
        <end position="374"/>
    </location>
</feature>
<protein>
    <recommendedName>
        <fullName evidence="7">C2H2 type master regulator of conidiophore development brlA</fullName>
    </recommendedName>
</protein>
<organism>
    <name type="scientific">Aspergillus niger (strain ATCC MYA-4892 / CBS 513.88 / FGSC A1513)</name>
    <dbReference type="NCBI Taxonomy" id="425011"/>
    <lineage>
        <taxon>Eukaryota</taxon>
        <taxon>Fungi</taxon>
        <taxon>Dikarya</taxon>
        <taxon>Ascomycota</taxon>
        <taxon>Pezizomycotina</taxon>
        <taxon>Eurotiomycetes</taxon>
        <taxon>Eurotiomycetidae</taxon>
        <taxon>Eurotiales</taxon>
        <taxon>Aspergillaceae</taxon>
        <taxon>Aspergillus</taxon>
        <taxon>Aspergillus subgen. Circumdati</taxon>
    </lineage>
</organism>
<name>BRLA_ASPNC</name>
<sequence length="425" mass="47419">MRSQGNMSDRLTIEVDCTSLGSNECPSMASSFSPMESPTPTPTSVYSQGSLASPTWHEGGSYPGQGYERHTGTTPMRSAFRLASMTSNDSMGMSYGQMEAQERMPMTDFLSGYDENVEHFWIPQEAQKAYEHGVPGLPYPQAMPQYSTMGRSSYRQHAAPYLPDSATNPCLSRSIFHQPERVPNSMSMGNVIPWMAPQPDSIAPQTIAPSQVAPVTPPPSYSEFSGSINTFKTHSPTTPVRSCSLGTTSGTDTPMSRLSGGMDYLDDFNQSPVYRDNLARVQRQPSRKVARKQSSKQSLSLENLPSIIKQVQFKCKEPGCKGRFKRQEHLKRHMKSHSKEKPHVCWVPGCERAFSRSDNLNAHYTKTHSKRGGRNRYVATLDENSPDYNPEYRGQLTADGRPVYNSKSQDLMPDARETSEEAWLE</sequence>
<keyword id="KW-0010">Activator</keyword>
<keyword id="KW-0183">Conidiation</keyword>
<keyword id="KW-0238">DNA-binding</keyword>
<keyword id="KW-0479">Metal-binding</keyword>
<keyword id="KW-0539">Nucleus</keyword>
<keyword id="KW-1185">Reference proteome</keyword>
<keyword id="KW-0677">Repeat</keyword>
<keyword id="KW-0749">Sporulation</keyword>
<keyword id="KW-0804">Transcription</keyword>
<keyword id="KW-0805">Transcription regulation</keyword>
<keyword id="KW-0862">Zinc</keyword>
<keyword id="KW-0863">Zinc-finger</keyword>
<comment type="function">
    <text evidence="2 5">BrlA, abaA and wetA are pivotal regulators of conidiophore development and conidium maturation (By similarity). They act individually and together to regulate their own expression and that of numerous other sporulation-specific genes (PubMed:25629352). Binds promoters of target genes at brlA response elements (BREs) containing the conserved sequence 5'-(C/A)(A/G)AGGG(G/A)-3' (By similarity). Also coordinates the expression of carbohydrate-active enzymes and of the key effectors of cell wall remodeling during autolysis (PubMed:25629352).</text>
</comment>
<comment type="subcellular location">
    <subcellularLocation>
        <location evidence="1">Nucleus</location>
    </subcellularLocation>
</comment>
<comment type="disruption phenotype">
    <text evidence="5">Forms aconidial fluffy colonies (PubMed:25629352).</text>
</comment>
<proteinExistence type="inferred from homology"/>
<dbReference type="EMBL" id="AM269980">
    <property type="protein sequence ID" value="CAK37235.1"/>
    <property type="molecule type" value="Genomic_DNA"/>
</dbReference>
<dbReference type="RefSeq" id="XP_001389472.2">
    <property type="nucleotide sequence ID" value="XM_001389435.2"/>
</dbReference>
<dbReference type="SMR" id="A2QA83"/>
<dbReference type="EnsemblFungi" id="CAK37235">
    <property type="protein sequence ID" value="CAK37235"/>
    <property type="gene ID" value="An01g10540"/>
</dbReference>
<dbReference type="GeneID" id="4978338"/>
<dbReference type="KEGG" id="ang:An01g10540"/>
<dbReference type="HOGENOM" id="CLU_655506_0_0_1"/>
<dbReference type="Proteomes" id="UP000006706">
    <property type="component" value="Chromosome 2R"/>
</dbReference>
<dbReference type="GO" id="GO:0005634">
    <property type="term" value="C:nucleus"/>
    <property type="evidence" value="ECO:0007669"/>
    <property type="project" value="UniProtKB-SubCell"/>
</dbReference>
<dbReference type="GO" id="GO:0003677">
    <property type="term" value="F:DNA binding"/>
    <property type="evidence" value="ECO:0007669"/>
    <property type="project" value="UniProtKB-KW"/>
</dbReference>
<dbReference type="GO" id="GO:0003712">
    <property type="term" value="F:transcription coregulator activity"/>
    <property type="evidence" value="ECO:0007669"/>
    <property type="project" value="TreeGrafter"/>
</dbReference>
<dbReference type="GO" id="GO:0008270">
    <property type="term" value="F:zinc ion binding"/>
    <property type="evidence" value="ECO:0007669"/>
    <property type="project" value="UniProtKB-KW"/>
</dbReference>
<dbReference type="GO" id="GO:0048315">
    <property type="term" value="P:conidium formation"/>
    <property type="evidence" value="ECO:0007669"/>
    <property type="project" value="UniProtKB-KW"/>
</dbReference>
<dbReference type="GO" id="GO:0006357">
    <property type="term" value="P:regulation of transcription by RNA polymerase II"/>
    <property type="evidence" value="ECO:0007669"/>
    <property type="project" value="TreeGrafter"/>
</dbReference>
<dbReference type="GO" id="GO:0030435">
    <property type="term" value="P:sporulation resulting in formation of a cellular spore"/>
    <property type="evidence" value="ECO:0007669"/>
    <property type="project" value="UniProtKB-KW"/>
</dbReference>
<dbReference type="FunFam" id="3.30.160.60:FF:000845">
    <property type="entry name" value="C2H2 type conidiation transcription factor BrlA"/>
    <property type="match status" value="1"/>
</dbReference>
<dbReference type="Gene3D" id="3.30.160.60">
    <property type="entry name" value="Classic Zinc Finger"/>
    <property type="match status" value="2"/>
</dbReference>
<dbReference type="InterPro" id="IPR051061">
    <property type="entry name" value="Zinc_finger_trans_reg"/>
</dbReference>
<dbReference type="InterPro" id="IPR036236">
    <property type="entry name" value="Znf_C2H2_sf"/>
</dbReference>
<dbReference type="InterPro" id="IPR013087">
    <property type="entry name" value="Znf_C2H2_type"/>
</dbReference>
<dbReference type="PANTHER" id="PTHR46179">
    <property type="entry name" value="ZINC FINGER PROTEIN"/>
    <property type="match status" value="1"/>
</dbReference>
<dbReference type="PANTHER" id="PTHR46179:SF26">
    <property type="entry name" value="ZINC FINGER PROTEIN 423 HOMOLOG"/>
    <property type="match status" value="1"/>
</dbReference>
<dbReference type="Pfam" id="PF00096">
    <property type="entry name" value="zf-C2H2"/>
    <property type="match status" value="2"/>
</dbReference>
<dbReference type="SMART" id="SM00355">
    <property type="entry name" value="ZnF_C2H2"/>
    <property type="match status" value="2"/>
</dbReference>
<dbReference type="SUPFAM" id="SSF57667">
    <property type="entry name" value="beta-beta-alpha zinc fingers"/>
    <property type="match status" value="1"/>
</dbReference>
<dbReference type="PROSITE" id="PS00028">
    <property type="entry name" value="ZINC_FINGER_C2H2_1"/>
    <property type="match status" value="2"/>
</dbReference>
<dbReference type="PROSITE" id="PS50157">
    <property type="entry name" value="ZINC_FINGER_C2H2_2"/>
    <property type="match status" value="2"/>
</dbReference>
<evidence type="ECO:0000250" key="1">
    <source>
        <dbReference type="UniProtKB" id="P10069"/>
    </source>
</evidence>
<evidence type="ECO:0000250" key="2">
    <source>
        <dbReference type="UniProtKB" id="P22022"/>
    </source>
</evidence>
<evidence type="ECO:0000255" key="3">
    <source>
        <dbReference type="PROSITE-ProRule" id="PRU00042"/>
    </source>
</evidence>
<evidence type="ECO:0000256" key="4">
    <source>
        <dbReference type="SAM" id="MobiDB-lite"/>
    </source>
</evidence>
<evidence type="ECO:0000269" key="5">
    <source>
    </source>
</evidence>
<evidence type="ECO:0000303" key="6">
    <source>
    </source>
</evidence>
<evidence type="ECO:0000305" key="7"/>